<accession>Q2LQU2</accession>
<dbReference type="EC" id="2.5.1.61" evidence="1"/>
<dbReference type="EMBL" id="CP000252">
    <property type="protein sequence ID" value="ABC76452.1"/>
    <property type="molecule type" value="Genomic_DNA"/>
</dbReference>
<dbReference type="RefSeq" id="WP_011416486.1">
    <property type="nucleotide sequence ID" value="NC_007759.1"/>
</dbReference>
<dbReference type="SMR" id="Q2LQU2"/>
<dbReference type="FunCoup" id="Q2LQU2">
    <property type="interactions" value="471"/>
</dbReference>
<dbReference type="STRING" id="56780.SYN_02273"/>
<dbReference type="KEGG" id="sat:SYN_02273"/>
<dbReference type="eggNOG" id="COG0181">
    <property type="taxonomic scope" value="Bacteria"/>
</dbReference>
<dbReference type="HOGENOM" id="CLU_019704_0_2_7"/>
<dbReference type="InParanoid" id="Q2LQU2"/>
<dbReference type="OrthoDB" id="9810298at2"/>
<dbReference type="UniPathway" id="UPA00251">
    <property type="reaction ID" value="UER00319"/>
</dbReference>
<dbReference type="Proteomes" id="UP000001933">
    <property type="component" value="Chromosome"/>
</dbReference>
<dbReference type="GO" id="GO:0005737">
    <property type="term" value="C:cytoplasm"/>
    <property type="evidence" value="ECO:0007669"/>
    <property type="project" value="TreeGrafter"/>
</dbReference>
<dbReference type="GO" id="GO:0004418">
    <property type="term" value="F:hydroxymethylbilane synthase activity"/>
    <property type="evidence" value="ECO:0007669"/>
    <property type="project" value="UniProtKB-UniRule"/>
</dbReference>
<dbReference type="GO" id="GO:0006782">
    <property type="term" value="P:protoporphyrinogen IX biosynthetic process"/>
    <property type="evidence" value="ECO:0007669"/>
    <property type="project" value="UniProtKB-UniRule"/>
</dbReference>
<dbReference type="FunFam" id="3.40.190.10:FF:000004">
    <property type="entry name" value="Porphobilinogen deaminase"/>
    <property type="match status" value="1"/>
</dbReference>
<dbReference type="FunFam" id="3.40.190.10:FF:000005">
    <property type="entry name" value="Porphobilinogen deaminase"/>
    <property type="match status" value="1"/>
</dbReference>
<dbReference type="Gene3D" id="3.40.190.10">
    <property type="entry name" value="Periplasmic binding protein-like II"/>
    <property type="match status" value="2"/>
</dbReference>
<dbReference type="Gene3D" id="3.30.160.40">
    <property type="entry name" value="Porphobilinogen deaminase, C-terminal domain"/>
    <property type="match status" value="1"/>
</dbReference>
<dbReference type="HAMAP" id="MF_00260">
    <property type="entry name" value="Porphobil_deam"/>
    <property type="match status" value="1"/>
</dbReference>
<dbReference type="InterPro" id="IPR000860">
    <property type="entry name" value="HemC"/>
</dbReference>
<dbReference type="InterPro" id="IPR022417">
    <property type="entry name" value="Porphobilin_deaminase_N"/>
</dbReference>
<dbReference type="InterPro" id="IPR022418">
    <property type="entry name" value="Porphobilinogen_deaminase_C"/>
</dbReference>
<dbReference type="InterPro" id="IPR036803">
    <property type="entry name" value="Porphobilinogen_deaminase_C_sf"/>
</dbReference>
<dbReference type="NCBIfam" id="TIGR00212">
    <property type="entry name" value="hemC"/>
    <property type="match status" value="1"/>
</dbReference>
<dbReference type="PANTHER" id="PTHR11557">
    <property type="entry name" value="PORPHOBILINOGEN DEAMINASE"/>
    <property type="match status" value="1"/>
</dbReference>
<dbReference type="PANTHER" id="PTHR11557:SF0">
    <property type="entry name" value="PORPHOBILINOGEN DEAMINASE"/>
    <property type="match status" value="1"/>
</dbReference>
<dbReference type="Pfam" id="PF01379">
    <property type="entry name" value="Porphobil_deam"/>
    <property type="match status" value="1"/>
</dbReference>
<dbReference type="Pfam" id="PF03900">
    <property type="entry name" value="Porphobil_deamC"/>
    <property type="match status" value="1"/>
</dbReference>
<dbReference type="PIRSF" id="PIRSF001438">
    <property type="entry name" value="4pyrrol_synth_OHMeBilane_synth"/>
    <property type="match status" value="1"/>
</dbReference>
<dbReference type="PRINTS" id="PR00151">
    <property type="entry name" value="PORPHBDMNASE"/>
</dbReference>
<dbReference type="SUPFAM" id="SSF53850">
    <property type="entry name" value="Periplasmic binding protein-like II"/>
    <property type="match status" value="1"/>
</dbReference>
<dbReference type="SUPFAM" id="SSF54782">
    <property type="entry name" value="Porphobilinogen deaminase (hydroxymethylbilane synthase), C-terminal domain"/>
    <property type="match status" value="1"/>
</dbReference>
<name>HEM3_SYNAS</name>
<sequence length="306" mass="33436">MKIGTRGSALALTQTRQIAARLQGQYPEMHLEIVVIKTSGDIQKDVPLAKIGGKGLFIKEIEEALLAGTVDLAVHSMKDLPAELPEGLQIAAVPRREDPRDVLISGICREFDNLPAGARIGTGSLRRSVQLRDWRPDLEIVPLRGNLDTRIRKVAQAALDGVVVAAAGIRRMGWAEKVTQFIPTEKMLPAVGQGVLCLETREEDEDLKAGLAFLEDKRTRREVTAERAFLRRLGGGCTLPVAAFAEQRGDVLTIRGMVGSLNERTMIRQEIYGSVEQAVDLGTELAERLLDGGGRILLEHLEDGQP</sequence>
<protein>
    <recommendedName>
        <fullName evidence="1">Porphobilinogen deaminase</fullName>
        <shortName evidence="1">PBG</shortName>
        <ecNumber evidence="1">2.5.1.61</ecNumber>
    </recommendedName>
    <alternativeName>
        <fullName evidence="1">Hydroxymethylbilane synthase</fullName>
        <shortName evidence="1">HMBS</shortName>
    </alternativeName>
    <alternativeName>
        <fullName evidence="1">Pre-uroporphyrinogen synthase</fullName>
    </alternativeName>
</protein>
<keyword id="KW-0627">Porphyrin biosynthesis</keyword>
<keyword id="KW-1185">Reference proteome</keyword>
<keyword id="KW-0808">Transferase</keyword>
<feature type="chain" id="PRO_1000114181" description="Porphobilinogen deaminase">
    <location>
        <begin position="1"/>
        <end position="306"/>
    </location>
</feature>
<feature type="modified residue" description="S-(dipyrrolylmethanemethyl)cysteine" evidence="1">
    <location>
        <position position="237"/>
    </location>
</feature>
<gene>
    <name evidence="1" type="primary">hemC</name>
    <name type="ordered locus">SYNAS_05730</name>
    <name type="ORF">SYN_02273</name>
</gene>
<reference key="1">
    <citation type="journal article" date="2007" name="Proc. Natl. Acad. Sci. U.S.A.">
        <title>The genome of Syntrophus aciditrophicus: life at the thermodynamic limit of microbial growth.</title>
        <authorList>
            <person name="McInerney M.J."/>
            <person name="Rohlin L."/>
            <person name="Mouttaki H."/>
            <person name="Kim U."/>
            <person name="Krupp R.S."/>
            <person name="Rios-Hernandez L."/>
            <person name="Sieber J."/>
            <person name="Struchtemeyer C.G."/>
            <person name="Bhattacharyya A."/>
            <person name="Campbell J.W."/>
            <person name="Gunsalus R.P."/>
        </authorList>
    </citation>
    <scope>NUCLEOTIDE SEQUENCE [LARGE SCALE GENOMIC DNA]</scope>
    <source>
        <strain>SB</strain>
    </source>
</reference>
<comment type="function">
    <text evidence="1">Tetrapolymerization of the monopyrrole PBG into the hydroxymethylbilane pre-uroporphyrinogen in several discrete steps.</text>
</comment>
<comment type="catalytic activity">
    <reaction evidence="1">
        <text>4 porphobilinogen + H2O = hydroxymethylbilane + 4 NH4(+)</text>
        <dbReference type="Rhea" id="RHEA:13185"/>
        <dbReference type="ChEBI" id="CHEBI:15377"/>
        <dbReference type="ChEBI" id="CHEBI:28938"/>
        <dbReference type="ChEBI" id="CHEBI:57845"/>
        <dbReference type="ChEBI" id="CHEBI:58126"/>
        <dbReference type="EC" id="2.5.1.61"/>
    </reaction>
</comment>
<comment type="cofactor">
    <cofactor evidence="1">
        <name>dipyrromethane</name>
        <dbReference type="ChEBI" id="CHEBI:60342"/>
    </cofactor>
    <text evidence="1">Binds 1 dipyrromethane group covalently.</text>
</comment>
<comment type="pathway">
    <text evidence="1">Porphyrin-containing compound metabolism; protoporphyrin-IX biosynthesis; coproporphyrinogen-III from 5-aminolevulinate: step 2/4.</text>
</comment>
<comment type="subunit">
    <text evidence="1">Monomer.</text>
</comment>
<comment type="miscellaneous">
    <text evidence="1">The porphobilinogen subunits are added to the dipyrromethane group.</text>
</comment>
<comment type="similarity">
    <text evidence="1">Belongs to the HMBS family.</text>
</comment>
<proteinExistence type="inferred from homology"/>
<evidence type="ECO:0000255" key="1">
    <source>
        <dbReference type="HAMAP-Rule" id="MF_00260"/>
    </source>
</evidence>
<organism>
    <name type="scientific">Syntrophus aciditrophicus (strain SB)</name>
    <dbReference type="NCBI Taxonomy" id="56780"/>
    <lineage>
        <taxon>Bacteria</taxon>
        <taxon>Pseudomonadati</taxon>
        <taxon>Thermodesulfobacteriota</taxon>
        <taxon>Syntrophia</taxon>
        <taxon>Syntrophales</taxon>
        <taxon>Syntrophaceae</taxon>
        <taxon>Syntrophus</taxon>
    </lineage>
</organism>